<sequence length="262" mass="28456">MNSSFSAPAKKSLGQHFLADRYYIDRIVQAVDPRPGQHLVEIGPGQGAITFPLLRKHGALTVIEFDRDLIAPLTDAAAPIGQLQIIHRDVLAVDFTAVADGTPIRLVGNLPYNISSPILFHALDHAGAVADMHFMLQKEVVDRMAAGPGSKVYGRLSVMLQAYCEVTALFVVPPGAFRPPPKVDSAVVRLVPRDAASVLIKDRKRFADVVRAGFGQRRKTLRNALSTVCEPAHFEAAGVRPDARAEQLEVADFIRLANVELA</sequence>
<reference key="1">
    <citation type="journal article" date="2002" name="Nature">
        <title>Comparison of the genomes of two Xanthomonas pathogens with differing host specificities.</title>
        <authorList>
            <person name="da Silva A.C.R."/>
            <person name="Ferro J.A."/>
            <person name="Reinach F.C."/>
            <person name="Farah C.S."/>
            <person name="Furlan L.R."/>
            <person name="Quaggio R.B."/>
            <person name="Monteiro-Vitorello C.B."/>
            <person name="Van Sluys M.A."/>
            <person name="Almeida N.F. Jr."/>
            <person name="Alves L.M.C."/>
            <person name="do Amaral A.M."/>
            <person name="Bertolini M.C."/>
            <person name="Camargo L.E.A."/>
            <person name="Camarotte G."/>
            <person name="Cannavan F."/>
            <person name="Cardozo J."/>
            <person name="Chambergo F."/>
            <person name="Ciapina L.P."/>
            <person name="Cicarelli R.M.B."/>
            <person name="Coutinho L.L."/>
            <person name="Cursino-Santos J.R."/>
            <person name="El-Dorry H."/>
            <person name="Faria J.B."/>
            <person name="Ferreira A.J.S."/>
            <person name="Ferreira R.C.C."/>
            <person name="Ferro M.I.T."/>
            <person name="Formighieri E.F."/>
            <person name="Franco M.C."/>
            <person name="Greggio C.C."/>
            <person name="Gruber A."/>
            <person name="Katsuyama A.M."/>
            <person name="Kishi L.T."/>
            <person name="Leite R.P."/>
            <person name="Lemos E.G.M."/>
            <person name="Lemos M.V.F."/>
            <person name="Locali E.C."/>
            <person name="Machado M.A."/>
            <person name="Madeira A.M.B.N."/>
            <person name="Martinez-Rossi N.M."/>
            <person name="Martins E.C."/>
            <person name="Meidanis J."/>
            <person name="Menck C.F.M."/>
            <person name="Miyaki C.Y."/>
            <person name="Moon D.H."/>
            <person name="Moreira L.M."/>
            <person name="Novo M.T.M."/>
            <person name="Okura V.K."/>
            <person name="Oliveira M.C."/>
            <person name="Oliveira V.R."/>
            <person name="Pereira H.A."/>
            <person name="Rossi A."/>
            <person name="Sena J.A.D."/>
            <person name="Silva C."/>
            <person name="de Souza R.F."/>
            <person name="Spinola L.A.F."/>
            <person name="Takita M.A."/>
            <person name="Tamura R.E."/>
            <person name="Teixeira E.C."/>
            <person name="Tezza R.I.D."/>
            <person name="Trindade dos Santos M."/>
            <person name="Truffi D."/>
            <person name="Tsai S.M."/>
            <person name="White F.F."/>
            <person name="Setubal J.C."/>
            <person name="Kitajima J.P."/>
        </authorList>
    </citation>
    <scope>NUCLEOTIDE SEQUENCE [LARGE SCALE GENOMIC DNA]</scope>
    <source>
        <strain>ATCC 33913 / DSM 3586 / NCPPB 528 / LMG 568 / P 25</strain>
    </source>
</reference>
<gene>
    <name evidence="1" type="primary">rsmA</name>
    <name evidence="1" type="synonym">ksgA</name>
    <name type="ordered locus">XCC0791</name>
</gene>
<accession>Q8PCE3</accession>
<evidence type="ECO:0000255" key="1">
    <source>
        <dbReference type="HAMAP-Rule" id="MF_00607"/>
    </source>
</evidence>
<protein>
    <recommendedName>
        <fullName evidence="1">Ribosomal RNA small subunit methyltransferase A</fullName>
        <ecNumber evidence="1">2.1.1.182</ecNumber>
    </recommendedName>
    <alternativeName>
        <fullName evidence="1">16S rRNA (adenine(1518)-N(6)/adenine(1519)-N(6))-dimethyltransferase</fullName>
    </alternativeName>
    <alternativeName>
        <fullName evidence="1">16S rRNA dimethyladenosine transferase</fullName>
    </alternativeName>
    <alternativeName>
        <fullName evidence="1">16S rRNA dimethylase</fullName>
    </alternativeName>
    <alternativeName>
        <fullName evidence="1">S-adenosylmethionine-6-N', N'-adenosyl(rRNA) dimethyltransferase</fullName>
    </alternativeName>
</protein>
<dbReference type="EC" id="2.1.1.182" evidence="1"/>
<dbReference type="EMBL" id="AE008922">
    <property type="protein sequence ID" value="AAM40106.1"/>
    <property type="molecule type" value="Genomic_DNA"/>
</dbReference>
<dbReference type="RefSeq" id="NP_636182.1">
    <property type="nucleotide sequence ID" value="NC_003902.1"/>
</dbReference>
<dbReference type="RefSeq" id="WP_011036027.1">
    <property type="nucleotide sequence ID" value="NC_003902.1"/>
</dbReference>
<dbReference type="SMR" id="Q8PCE3"/>
<dbReference type="STRING" id="190485.XCC0791"/>
<dbReference type="EnsemblBacteria" id="AAM40106">
    <property type="protein sequence ID" value="AAM40106"/>
    <property type="gene ID" value="XCC0791"/>
</dbReference>
<dbReference type="GeneID" id="58014634"/>
<dbReference type="KEGG" id="xcc:XCC0791"/>
<dbReference type="PATRIC" id="fig|190485.4.peg.861"/>
<dbReference type="eggNOG" id="COG0030">
    <property type="taxonomic scope" value="Bacteria"/>
</dbReference>
<dbReference type="HOGENOM" id="CLU_041220_0_1_6"/>
<dbReference type="OrthoDB" id="9814755at2"/>
<dbReference type="Proteomes" id="UP000001010">
    <property type="component" value="Chromosome"/>
</dbReference>
<dbReference type="GO" id="GO:0005829">
    <property type="term" value="C:cytosol"/>
    <property type="evidence" value="ECO:0000318"/>
    <property type="project" value="GO_Central"/>
</dbReference>
<dbReference type="GO" id="GO:0052908">
    <property type="term" value="F:16S rRNA (adenine(1518)-N(6)/adenine(1519)-N(6))-dimethyltransferase activity"/>
    <property type="evidence" value="ECO:0007669"/>
    <property type="project" value="UniProtKB-EC"/>
</dbReference>
<dbReference type="GO" id="GO:0003723">
    <property type="term" value="F:RNA binding"/>
    <property type="evidence" value="ECO:0007669"/>
    <property type="project" value="UniProtKB-KW"/>
</dbReference>
<dbReference type="GO" id="GO:0000179">
    <property type="term" value="F:rRNA (adenine-N6,N6-)-dimethyltransferase activity"/>
    <property type="evidence" value="ECO:0000318"/>
    <property type="project" value="GO_Central"/>
</dbReference>
<dbReference type="GO" id="GO:0031167">
    <property type="term" value="P:rRNA methylation"/>
    <property type="evidence" value="ECO:0000318"/>
    <property type="project" value="GO_Central"/>
</dbReference>
<dbReference type="FunFam" id="1.10.8.100:FF:000001">
    <property type="entry name" value="Ribosomal RNA small subunit methyltransferase A"/>
    <property type="match status" value="1"/>
</dbReference>
<dbReference type="FunFam" id="3.40.50.150:FF:000222">
    <property type="entry name" value="Ribosomal RNA small subunit methyltransferase A"/>
    <property type="match status" value="1"/>
</dbReference>
<dbReference type="Gene3D" id="1.10.8.100">
    <property type="entry name" value="Ribosomal RNA adenine dimethylase-like, domain 2"/>
    <property type="match status" value="1"/>
</dbReference>
<dbReference type="Gene3D" id="3.40.50.150">
    <property type="entry name" value="Vaccinia Virus protein VP39"/>
    <property type="match status" value="1"/>
</dbReference>
<dbReference type="HAMAP" id="MF_00607">
    <property type="entry name" value="16SrRNA_methyltr_A"/>
    <property type="match status" value="1"/>
</dbReference>
<dbReference type="InterPro" id="IPR001737">
    <property type="entry name" value="KsgA/Erm"/>
</dbReference>
<dbReference type="InterPro" id="IPR023165">
    <property type="entry name" value="rRNA_Ade_diMease-like_C"/>
</dbReference>
<dbReference type="InterPro" id="IPR020596">
    <property type="entry name" value="rRNA_Ade_Mease_Trfase_CS"/>
</dbReference>
<dbReference type="InterPro" id="IPR020598">
    <property type="entry name" value="rRNA_Ade_methylase_Trfase_N"/>
</dbReference>
<dbReference type="InterPro" id="IPR011530">
    <property type="entry name" value="rRNA_adenine_dimethylase"/>
</dbReference>
<dbReference type="InterPro" id="IPR029063">
    <property type="entry name" value="SAM-dependent_MTases_sf"/>
</dbReference>
<dbReference type="NCBIfam" id="TIGR00755">
    <property type="entry name" value="ksgA"/>
    <property type="match status" value="1"/>
</dbReference>
<dbReference type="PANTHER" id="PTHR11727">
    <property type="entry name" value="DIMETHYLADENOSINE TRANSFERASE"/>
    <property type="match status" value="1"/>
</dbReference>
<dbReference type="PANTHER" id="PTHR11727:SF7">
    <property type="entry name" value="DIMETHYLADENOSINE TRANSFERASE-RELATED"/>
    <property type="match status" value="1"/>
</dbReference>
<dbReference type="Pfam" id="PF00398">
    <property type="entry name" value="RrnaAD"/>
    <property type="match status" value="1"/>
</dbReference>
<dbReference type="SMART" id="SM00650">
    <property type="entry name" value="rADc"/>
    <property type="match status" value="1"/>
</dbReference>
<dbReference type="SUPFAM" id="SSF53335">
    <property type="entry name" value="S-adenosyl-L-methionine-dependent methyltransferases"/>
    <property type="match status" value="1"/>
</dbReference>
<dbReference type="PROSITE" id="PS01131">
    <property type="entry name" value="RRNA_A_DIMETH"/>
    <property type="match status" value="1"/>
</dbReference>
<dbReference type="PROSITE" id="PS51689">
    <property type="entry name" value="SAM_RNA_A_N6_MT"/>
    <property type="match status" value="1"/>
</dbReference>
<organism>
    <name type="scientific">Xanthomonas campestris pv. campestris (strain ATCC 33913 / DSM 3586 / NCPPB 528 / LMG 568 / P 25)</name>
    <dbReference type="NCBI Taxonomy" id="190485"/>
    <lineage>
        <taxon>Bacteria</taxon>
        <taxon>Pseudomonadati</taxon>
        <taxon>Pseudomonadota</taxon>
        <taxon>Gammaproteobacteria</taxon>
        <taxon>Lysobacterales</taxon>
        <taxon>Lysobacteraceae</taxon>
        <taxon>Xanthomonas</taxon>
    </lineage>
</organism>
<proteinExistence type="inferred from homology"/>
<comment type="function">
    <text evidence="1">Specifically dimethylates two adjacent adenosines (A1518 and A1519) in the loop of a conserved hairpin near the 3'-end of 16S rRNA in the 30S particle. May play a critical role in biogenesis of 30S subunits.</text>
</comment>
<comment type="catalytic activity">
    <reaction evidence="1">
        <text>adenosine(1518)/adenosine(1519) in 16S rRNA + 4 S-adenosyl-L-methionine = N(6)-dimethyladenosine(1518)/N(6)-dimethyladenosine(1519) in 16S rRNA + 4 S-adenosyl-L-homocysteine + 4 H(+)</text>
        <dbReference type="Rhea" id="RHEA:19609"/>
        <dbReference type="Rhea" id="RHEA-COMP:10232"/>
        <dbReference type="Rhea" id="RHEA-COMP:10233"/>
        <dbReference type="ChEBI" id="CHEBI:15378"/>
        <dbReference type="ChEBI" id="CHEBI:57856"/>
        <dbReference type="ChEBI" id="CHEBI:59789"/>
        <dbReference type="ChEBI" id="CHEBI:74411"/>
        <dbReference type="ChEBI" id="CHEBI:74493"/>
        <dbReference type="EC" id="2.1.1.182"/>
    </reaction>
</comment>
<comment type="subcellular location">
    <subcellularLocation>
        <location evidence="1">Cytoplasm</location>
    </subcellularLocation>
</comment>
<comment type="similarity">
    <text evidence="1">Belongs to the class I-like SAM-binding methyltransferase superfamily. rRNA adenine N(6)-methyltransferase family. RsmA subfamily.</text>
</comment>
<keyword id="KW-0963">Cytoplasm</keyword>
<keyword id="KW-0489">Methyltransferase</keyword>
<keyword id="KW-1185">Reference proteome</keyword>
<keyword id="KW-0694">RNA-binding</keyword>
<keyword id="KW-0698">rRNA processing</keyword>
<keyword id="KW-0949">S-adenosyl-L-methionine</keyword>
<keyword id="KW-0808">Transferase</keyword>
<feature type="chain" id="PRO_0000101644" description="Ribosomal RNA small subunit methyltransferase A">
    <location>
        <begin position="1"/>
        <end position="262"/>
    </location>
</feature>
<feature type="binding site" evidence="1">
    <location>
        <position position="16"/>
    </location>
    <ligand>
        <name>S-adenosyl-L-methionine</name>
        <dbReference type="ChEBI" id="CHEBI:59789"/>
    </ligand>
</feature>
<feature type="binding site" evidence="1">
    <location>
        <position position="18"/>
    </location>
    <ligand>
        <name>S-adenosyl-L-methionine</name>
        <dbReference type="ChEBI" id="CHEBI:59789"/>
    </ligand>
</feature>
<feature type="binding site" evidence="1">
    <location>
        <position position="43"/>
    </location>
    <ligand>
        <name>S-adenosyl-L-methionine</name>
        <dbReference type="ChEBI" id="CHEBI:59789"/>
    </ligand>
</feature>
<feature type="binding site" evidence="1">
    <location>
        <position position="64"/>
    </location>
    <ligand>
        <name>S-adenosyl-L-methionine</name>
        <dbReference type="ChEBI" id="CHEBI:59789"/>
    </ligand>
</feature>
<feature type="binding site" evidence="1">
    <location>
        <position position="89"/>
    </location>
    <ligand>
        <name>S-adenosyl-L-methionine</name>
        <dbReference type="ChEBI" id="CHEBI:59789"/>
    </ligand>
</feature>
<feature type="binding site" evidence="1">
    <location>
        <position position="109"/>
    </location>
    <ligand>
        <name>S-adenosyl-L-methionine</name>
        <dbReference type="ChEBI" id="CHEBI:59789"/>
    </ligand>
</feature>
<name>RSMA_XANCP</name>